<proteinExistence type="inferred from homology"/>
<evidence type="ECO:0000255" key="1">
    <source>
        <dbReference type="HAMAP-Rule" id="MF_01401"/>
    </source>
</evidence>
<gene>
    <name evidence="1" type="primary">msrA</name>
    <name type="ordered locus">SeHA_C4827</name>
</gene>
<sequence length="212" mass="23436">MSLFDKKHLVTQADALPGRNTPMPIATLHAVNEHSMTNVPAGMEIAYFAMGCFWGVERLFWQLPGVYSTAAGYAGGYTPNPTYREVCSGQTGHAEAVRIVYDPAVIRYEQLLQTFWENHDPTQGMQQGNDHGTQYRSAIYPLTPEQNAAAHASRERFQSAMAAAGDHRPITTEIAHATPFYYAEDEHQQYLHKNPYGYCGIGGIGVCLPPDA</sequence>
<feature type="chain" id="PRO_1000145433" description="Peptide methionine sulfoxide reductase MsrA">
    <location>
        <begin position="1"/>
        <end position="212"/>
    </location>
</feature>
<feature type="active site" evidence="1">
    <location>
        <position position="52"/>
    </location>
</feature>
<protein>
    <recommendedName>
        <fullName evidence="1">Peptide methionine sulfoxide reductase MsrA</fullName>
        <shortName evidence="1">Protein-methionine-S-oxide reductase</shortName>
        <ecNumber evidence="1">1.8.4.11</ecNumber>
    </recommendedName>
    <alternativeName>
        <fullName evidence="1">Peptide-methionine (S)-S-oxide reductase</fullName>
        <shortName evidence="1">Peptide Met(O) reductase</shortName>
    </alternativeName>
</protein>
<accession>B4TFF2</accession>
<keyword id="KW-0560">Oxidoreductase</keyword>
<name>MSRA_SALHS</name>
<comment type="function">
    <text evidence="1">Has an important function as a repair enzyme for proteins that have been inactivated by oxidation. Catalyzes the reversible oxidation-reduction of methionine sulfoxide in proteins to methionine.</text>
</comment>
<comment type="catalytic activity">
    <reaction evidence="1">
        <text>L-methionyl-[protein] + [thioredoxin]-disulfide + H2O = L-methionyl-(S)-S-oxide-[protein] + [thioredoxin]-dithiol</text>
        <dbReference type="Rhea" id="RHEA:14217"/>
        <dbReference type="Rhea" id="RHEA-COMP:10698"/>
        <dbReference type="Rhea" id="RHEA-COMP:10700"/>
        <dbReference type="Rhea" id="RHEA-COMP:12313"/>
        <dbReference type="Rhea" id="RHEA-COMP:12315"/>
        <dbReference type="ChEBI" id="CHEBI:15377"/>
        <dbReference type="ChEBI" id="CHEBI:16044"/>
        <dbReference type="ChEBI" id="CHEBI:29950"/>
        <dbReference type="ChEBI" id="CHEBI:44120"/>
        <dbReference type="ChEBI" id="CHEBI:50058"/>
        <dbReference type="EC" id="1.8.4.11"/>
    </reaction>
</comment>
<comment type="catalytic activity">
    <reaction evidence="1">
        <text>[thioredoxin]-disulfide + L-methionine + H2O = L-methionine (S)-S-oxide + [thioredoxin]-dithiol</text>
        <dbReference type="Rhea" id="RHEA:19993"/>
        <dbReference type="Rhea" id="RHEA-COMP:10698"/>
        <dbReference type="Rhea" id="RHEA-COMP:10700"/>
        <dbReference type="ChEBI" id="CHEBI:15377"/>
        <dbReference type="ChEBI" id="CHEBI:29950"/>
        <dbReference type="ChEBI" id="CHEBI:50058"/>
        <dbReference type="ChEBI" id="CHEBI:57844"/>
        <dbReference type="ChEBI" id="CHEBI:58772"/>
        <dbReference type="EC" id="1.8.4.11"/>
    </reaction>
</comment>
<comment type="similarity">
    <text evidence="1">Belongs to the MsrA Met sulfoxide reductase family.</text>
</comment>
<organism>
    <name type="scientific">Salmonella heidelberg (strain SL476)</name>
    <dbReference type="NCBI Taxonomy" id="454169"/>
    <lineage>
        <taxon>Bacteria</taxon>
        <taxon>Pseudomonadati</taxon>
        <taxon>Pseudomonadota</taxon>
        <taxon>Gammaproteobacteria</taxon>
        <taxon>Enterobacterales</taxon>
        <taxon>Enterobacteriaceae</taxon>
        <taxon>Salmonella</taxon>
    </lineage>
</organism>
<dbReference type="EC" id="1.8.4.11" evidence="1"/>
<dbReference type="EMBL" id="CP001120">
    <property type="protein sequence ID" value="ACF70227.1"/>
    <property type="molecule type" value="Genomic_DNA"/>
</dbReference>
<dbReference type="RefSeq" id="WP_000051467.1">
    <property type="nucleotide sequence ID" value="NC_011083.1"/>
</dbReference>
<dbReference type="SMR" id="B4TFF2"/>
<dbReference type="KEGG" id="seh:SeHA_C4827"/>
<dbReference type="HOGENOM" id="CLU_031040_10_3_6"/>
<dbReference type="Proteomes" id="UP000001866">
    <property type="component" value="Chromosome"/>
</dbReference>
<dbReference type="GO" id="GO:0005737">
    <property type="term" value="C:cytoplasm"/>
    <property type="evidence" value="ECO:0007669"/>
    <property type="project" value="TreeGrafter"/>
</dbReference>
<dbReference type="GO" id="GO:0036456">
    <property type="term" value="F:L-methionine-(S)-S-oxide reductase activity"/>
    <property type="evidence" value="ECO:0007669"/>
    <property type="project" value="TreeGrafter"/>
</dbReference>
<dbReference type="GO" id="GO:0008113">
    <property type="term" value="F:peptide-methionine (S)-S-oxide reductase activity"/>
    <property type="evidence" value="ECO:0007669"/>
    <property type="project" value="UniProtKB-UniRule"/>
</dbReference>
<dbReference type="GO" id="GO:0034599">
    <property type="term" value="P:cellular response to oxidative stress"/>
    <property type="evidence" value="ECO:0007669"/>
    <property type="project" value="TreeGrafter"/>
</dbReference>
<dbReference type="GO" id="GO:0036211">
    <property type="term" value="P:protein modification process"/>
    <property type="evidence" value="ECO:0007669"/>
    <property type="project" value="UniProtKB-UniRule"/>
</dbReference>
<dbReference type="FunFam" id="3.30.1060.10:FF:000001">
    <property type="entry name" value="Peptide methionine sulfoxide reductase MsrA"/>
    <property type="match status" value="1"/>
</dbReference>
<dbReference type="Gene3D" id="3.30.1060.10">
    <property type="entry name" value="Peptide methionine sulphoxide reductase MsrA"/>
    <property type="match status" value="1"/>
</dbReference>
<dbReference type="HAMAP" id="MF_01401">
    <property type="entry name" value="MsrA"/>
    <property type="match status" value="1"/>
</dbReference>
<dbReference type="InterPro" id="IPR002569">
    <property type="entry name" value="Met_Sox_Rdtase_MsrA_dom"/>
</dbReference>
<dbReference type="InterPro" id="IPR036509">
    <property type="entry name" value="Met_Sox_Rdtase_MsrA_sf"/>
</dbReference>
<dbReference type="InterPro" id="IPR050162">
    <property type="entry name" value="MsrA_MetSO_reductase"/>
</dbReference>
<dbReference type="NCBIfam" id="TIGR00401">
    <property type="entry name" value="msrA"/>
    <property type="match status" value="1"/>
</dbReference>
<dbReference type="PANTHER" id="PTHR42799">
    <property type="entry name" value="MITOCHONDRIAL PEPTIDE METHIONINE SULFOXIDE REDUCTASE"/>
    <property type="match status" value="1"/>
</dbReference>
<dbReference type="PANTHER" id="PTHR42799:SF2">
    <property type="entry name" value="MITOCHONDRIAL PEPTIDE METHIONINE SULFOXIDE REDUCTASE"/>
    <property type="match status" value="1"/>
</dbReference>
<dbReference type="Pfam" id="PF01625">
    <property type="entry name" value="PMSR"/>
    <property type="match status" value="1"/>
</dbReference>
<dbReference type="SUPFAM" id="SSF55068">
    <property type="entry name" value="Peptide methionine sulfoxide reductase"/>
    <property type="match status" value="1"/>
</dbReference>
<reference key="1">
    <citation type="journal article" date="2011" name="J. Bacteriol.">
        <title>Comparative genomics of 28 Salmonella enterica isolates: evidence for CRISPR-mediated adaptive sublineage evolution.</title>
        <authorList>
            <person name="Fricke W.F."/>
            <person name="Mammel M.K."/>
            <person name="McDermott P.F."/>
            <person name="Tartera C."/>
            <person name="White D.G."/>
            <person name="Leclerc J.E."/>
            <person name="Ravel J."/>
            <person name="Cebula T.A."/>
        </authorList>
    </citation>
    <scope>NUCLEOTIDE SEQUENCE [LARGE SCALE GENOMIC DNA]</scope>
    <source>
        <strain>SL476</strain>
    </source>
</reference>